<name>PVK2_DERKE</name>
<sequence length="12" mass="1160">GGSSGLISMPRV</sequence>
<organism>
    <name type="scientific">Deropeltis sp. (strain Kenya)</name>
    <dbReference type="NCBI Taxonomy" id="303920"/>
    <lineage>
        <taxon>Eukaryota</taxon>
        <taxon>Metazoa</taxon>
        <taxon>Ecdysozoa</taxon>
        <taxon>Arthropoda</taxon>
        <taxon>Hexapoda</taxon>
        <taxon>Insecta</taxon>
        <taxon>Pterygota</taxon>
        <taxon>Neoptera</taxon>
        <taxon>Polyneoptera</taxon>
        <taxon>Dictyoptera</taxon>
        <taxon>Blattodea</taxon>
        <taxon>Blattoidea</taxon>
        <taxon>Blattidae</taxon>
        <taxon>Blattinae</taxon>
        <taxon>Deropeltis</taxon>
    </lineage>
</organism>
<proteinExistence type="evidence at protein level"/>
<accession>P84378</accession>
<accession>P84431</accession>
<dbReference type="GO" id="GO:0005576">
    <property type="term" value="C:extracellular region"/>
    <property type="evidence" value="ECO:0007669"/>
    <property type="project" value="UniProtKB-SubCell"/>
</dbReference>
<dbReference type="GO" id="GO:0007218">
    <property type="term" value="P:neuropeptide signaling pathway"/>
    <property type="evidence" value="ECO:0007669"/>
    <property type="project" value="UniProtKB-KW"/>
</dbReference>
<dbReference type="InterPro" id="IPR013231">
    <property type="entry name" value="Periviscerokinin"/>
</dbReference>
<dbReference type="Pfam" id="PF08259">
    <property type="entry name" value="Periviscerokin"/>
    <property type="match status" value="1"/>
</dbReference>
<protein>
    <recommendedName>
        <fullName>Periviscerokinin-2.1</fullName>
        <shortName>PVK-2.1</shortName>
    </recommendedName>
    <component>
        <recommendedName>
            <fullName>Periviscerokinin-2.2</fullName>
            <shortName>PVK-2.2</shortName>
        </recommendedName>
    </component>
</protein>
<keyword id="KW-0027">Amidation</keyword>
<keyword id="KW-0903">Direct protein sequencing</keyword>
<keyword id="KW-0527">Neuropeptide</keyword>
<keyword id="KW-0964">Secreted</keyword>
<comment type="function">
    <text evidence="3">Mediates visceral muscle contractile activity (myotropic activity).</text>
</comment>
<comment type="subcellular location">
    <subcellularLocation>
        <location evidence="2">Secreted</location>
    </subcellularLocation>
</comment>
<comment type="tissue specificity">
    <text evidence="2">Abdominal perisympathetic organs.</text>
</comment>
<comment type="mass spectrometry" mass="1159.6" method="MALDI" evidence="2">
    <molecule>Periviscerokinin-2.1</molecule>
</comment>
<comment type="mass spectrometry" mass="1102.6" method="MALDI" evidence="2">
    <molecule>Periviscerokinin-2.2</molecule>
</comment>
<comment type="similarity">
    <text evidence="1">Belongs to the periviscerokinin family.</text>
</comment>
<feature type="peptide" id="PRO_0000023623" description="Periviscerokinin-2.1">
    <location>
        <begin position="1"/>
        <end position="12"/>
    </location>
</feature>
<feature type="peptide" id="PRO_0000023624" description="Periviscerokinin-2.2">
    <location>
        <begin position="2"/>
        <end position="12"/>
    </location>
</feature>
<feature type="modified residue" description="Valine amide" evidence="2">
    <location>
        <position position="12"/>
    </location>
</feature>
<reference evidence="3" key="1">
    <citation type="journal article" date="2005" name="Peptides">
        <title>Peptidomics of neurohemal organs from species of the cockroach family Blattidae: how do neuropeptides of closely related species differ?</title>
        <authorList>
            <person name="Predel R."/>
            <person name="Gaede G."/>
        </authorList>
    </citation>
    <scope>PROTEIN SEQUENCE</scope>
    <scope>SUBCELLULAR LOCATION</scope>
    <scope>TISSUE SPECIFICITY</scope>
    <scope>MASS SPECTROMETRY</scope>
    <scope>AMIDATION AT VAL-12</scope>
    <source>
        <tissue evidence="2">Abdominal perisympathetic organs</tissue>
    </source>
</reference>
<evidence type="ECO:0000255" key="1"/>
<evidence type="ECO:0000269" key="2">
    <source>
    </source>
</evidence>
<evidence type="ECO:0000305" key="3"/>